<accession>P35283</accession>
<accession>Q0PD43</accession>
<accession>Q9CUW7</accession>
<keyword id="KW-0007">Acetylation</keyword>
<keyword id="KW-0072">Autophagy</keyword>
<keyword id="KW-0968">Cytoplasmic vesicle</keyword>
<keyword id="KW-0967">Endosome</keyword>
<keyword id="KW-0333">Golgi apparatus</keyword>
<keyword id="KW-0342">GTP-binding</keyword>
<keyword id="KW-0378">Hydrolase</keyword>
<keyword id="KW-0449">Lipoprotein</keyword>
<keyword id="KW-0458">Lysosome</keyword>
<keyword id="KW-0460">Magnesium</keyword>
<keyword id="KW-0472">Membrane</keyword>
<keyword id="KW-0479">Metal-binding</keyword>
<keyword id="KW-0547">Nucleotide-binding</keyword>
<keyword id="KW-0597">Phosphoprotein</keyword>
<keyword id="KW-0636">Prenylation</keyword>
<keyword id="KW-0653">Protein transport</keyword>
<keyword id="KW-1185">Reference proteome</keyword>
<keyword id="KW-0813">Transport</keyword>
<sequence>MDPSAALHRRPAGGSLGAVSPALSGGQARRRKQPPRPADFKLQVIIIGSRGVGKTSLMERFTDDTFCEACKSTVGVDFKIKTVELRGKKIRLQIWDTAGQERFNSITSAYYRSAKGIILVYDITKKETFDDLPKWMKMIDKYASEDAELLLVGNKLDCETDREISRQQGEKFAQQITGMRFCEASAKDNFNVDEIFLKLVDDILKKMPLDVLRNELSNSILSLQPEPEIPPELPPPRPHVRCC</sequence>
<protein>
    <recommendedName>
        <fullName>Ras-related protein Rab-12</fullName>
        <ecNumber evidence="3">3.6.5.2</ecNumber>
    </recommendedName>
    <alternativeName>
        <fullName>Rab-13</fullName>
    </alternativeName>
</protein>
<evidence type="ECO:0000250" key="1"/>
<evidence type="ECO:0000250" key="2">
    <source>
        <dbReference type="UniProtKB" id="P51152"/>
    </source>
</evidence>
<evidence type="ECO:0000250" key="3">
    <source>
        <dbReference type="UniProtKB" id="P61026"/>
    </source>
</evidence>
<evidence type="ECO:0000250" key="4">
    <source>
        <dbReference type="UniProtKB" id="P62820"/>
    </source>
</evidence>
<evidence type="ECO:0000250" key="5">
    <source>
        <dbReference type="UniProtKB" id="Q6IQ22"/>
    </source>
</evidence>
<evidence type="ECO:0000256" key="6">
    <source>
        <dbReference type="SAM" id="MobiDB-lite"/>
    </source>
</evidence>
<evidence type="ECO:0000269" key="7">
    <source>
    </source>
</evidence>
<evidence type="ECO:0000269" key="8">
    <source>
    </source>
</evidence>
<evidence type="ECO:0000269" key="9">
    <source>
    </source>
</evidence>
<evidence type="ECO:0000269" key="10">
    <source>
    </source>
</evidence>
<evidence type="ECO:0000305" key="11"/>
<evidence type="ECO:0000312" key="12">
    <source>
        <dbReference type="MGI" id="MGI:894284"/>
    </source>
</evidence>
<evidence type="ECO:0007744" key="13">
    <source>
    </source>
</evidence>
<evidence type="ECO:0007744" key="14">
    <source>
    </source>
</evidence>
<evidence type="ECO:0007744" key="15">
    <source>
    </source>
</evidence>
<organism>
    <name type="scientific">Mus musculus</name>
    <name type="common">Mouse</name>
    <dbReference type="NCBI Taxonomy" id="10090"/>
    <lineage>
        <taxon>Eukaryota</taxon>
        <taxon>Metazoa</taxon>
        <taxon>Chordata</taxon>
        <taxon>Craniata</taxon>
        <taxon>Vertebrata</taxon>
        <taxon>Euteleostomi</taxon>
        <taxon>Mammalia</taxon>
        <taxon>Eutheria</taxon>
        <taxon>Euarchontoglires</taxon>
        <taxon>Glires</taxon>
        <taxon>Rodentia</taxon>
        <taxon>Myomorpha</taxon>
        <taxon>Muroidea</taxon>
        <taxon>Muridae</taxon>
        <taxon>Murinae</taxon>
        <taxon>Mus</taxon>
        <taxon>Mus</taxon>
    </lineage>
</organism>
<feature type="chain" id="PRO_0000121180" description="Ras-related protein Rab-12">
    <location>
        <begin position="1"/>
        <end position="243"/>
    </location>
</feature>
<feature type="region of interest" description="Disordered" evidence="6">
    <location>
        <begin position="1"/>
        <end position="36"/>
    </location>
</feature>
<feature type="short sequence motif" description="Switch 1" evidence="4">
    <location>
        <begin position="64"/>
        <end position="78"/>
    </location>
</feature>
<feature type="short sequence motif" description="Switch 2" evidence="4">
    <location>
        <begin position="96"/>
        <end position="113"/>
    </location>
</feature>
<feature type="binding site" evidence="3">
    <location>
        <position position="51"/>
    </location>
    <ligand>
        <name>GTP</name>
        <dbReference type="ChEBI" id="CHEBI:37565"/>
    </ligand>
</feature>
<feature type="binding site" evidence="3">
    <location>
        <position position="52"/>
    </location>
    <ligand>
        <name>GTP</name>
        <dbReference type="ChEBI" id="CHEBI:37565"/>
    </ligand>
</feature>
<feature type="binding site" evidence="3">
    <location>
        <position position="53"/>
    </location>
    <ligand>
        <name>GTP</name>
        <dbReference type="ChEBI" id="CHEBI:37565"/>
    </ligand>
</feature>
<feature type="binding site" evidence="3">
    <location>
        <position position="54"/>
    </location>
    <ligand>
        <name>GTP</name>
        <dbReference type="ChEBI" id="CHEBI:37565"/>
    </ligand>
</feature>
<feature type="binding site" evidence="3">
    <location>
        <position position="55"/>
    </location>
    <ligand>
        <name>GTP</name>
        <dbReference type="ChEBI" id="CHEBI:37565"/>
    </ligand>
</feature>
<feature type="binding site" evidence="5">
    <location>
        <position position="55"/>
    </location>
    <ligand>
        <name>Mg(2+)</name>
        <dbReference type="ChEBI" id="CHEBI:18420"/>
    </ligand>
</feature>
<feature type="binding site" evidence="3">
    <location>
        <position position="72"/>
    </location>
    <ligand>
        <name>GTP</name>
        <dbReference type="ChEBI" id="CHEBI:37565"/>
    </ligand>
</feature>
<feature type="binding site" evidence="3">
    <location>
        <position position="73"/>
    </location>
    <ligand>
        <name>GTP</name>
        <dbReference type="ChEBI" id="CHEBI:37565"/>
    </ligand>
</feature>
<feature type="binding site" evidence="3">
    <location>
        <position position="73"/>
    </location>
    <ligand>
        <name>Mg(2+)</name>
        <dbReference type="ChEBI" id="CHEBI:18420"/>
    </ligand>
</feature>
<feature type="binding site" evidence="3">
    <location>
        <position position="96"/>
    </location>
    <ligand>
        <name>Mg(2+)</name>
        <dbReference type="ChEBI" id="CHEBI:18420"/>
    </ligand>
</feature>
<feature type="binding site" evidence="3">
    <location>
        <position position="99"/>
    </location>
    <ligand>
        <name>GTP</name>
        <dbReference type="ChEBI" id="CHEBI:37565"/>
    </ligand>
</feature>
<feature type="binding site" evidence="3">
    <location>
        <position position="154"/>
    </location>
    <ligand>
        <name>GTP</name>
        <dbReference type="ChEBI" id="CHEBI:37565"/>
    </ligand>
</feature>
<feature type="binding site" evidence="3">
    <location>
        <position position="155"/>
    </location>
    <ligand>
        <name>GTP</name>
        <dbReference type="ChEBI" id="CHEBI:37565"/>
    </ligand>
</feature>
<feature type="binding site" evidence="3">
    <location>
        <position position="157"/>
    </location>
    <ligand>
        <name>GTP</name>
        <dbReference type="ChEBI" id="CHEBI:37565"/>
    </ligand>
</feature>
<feature type="binding site" evidence="3">
    <location>
        <position position="185"/>
    </location>
    <ligand>
        <name>GTP</name>
        <dbReference type="ChEBI" id="CHEBI:37565"/>
    </ligand>
</feature>
<feature type="binding site" evidence="3">
    <location>
        <position position="186"/>
    </location>
    <ligand>
        <name>GTP</name>
        <dbReference type="ChEBI" id="CHEBI:37565"/>
    </ligand>
</feature>
<feature type="binding site" evidence="3">
    <location>
        <position position="187"/>
    </location>
    <ligand>
        <name>GTP</name>
        <dbReference type="ChEBI" id="CHEBI:37565"/>
    </ligand>
</feature>
<feature type="modified residue" description="N-acetylmethionine" evidence="5">
    <location>
        <position position="1"/>
    </location>
</feature>
<feature type="modified residue" description="Phosphoserine" evidence="14 15">
    <location>
        <position position="15"/>
    </location>
</feature>
<feature type="modified residue" description="Phosphoserine" evidence="13 14 15">
    <location>
        <position position="20"/>
    </location>
</feature>
<feature type="modified residue" description="Phosphoserine" evidence="15">
    <location>
        <position position="24"/>
    </location>
</feature>
<feature type="modified residue" description="Phosphoserine; by LRRK2" evidence="9 10 14 15">
    <location>
        <position position="105"/>
    </location>
</feature>
<feature type="lipid moiety-binding region" description="S-geranylgeranyl cysteine" evidence="1">
    <location>
        <position position="242"/>
    </location>
</feature>
<feature type="lipid moiety-binding region" description="S-geranylgeranyl cysteine" evidence="1">
    <location>
        <position position="243"/>
    </location>
</feature>
<feature type="mutagenesis site" description="Probable constitutively active mutant unable to hydrolyze GTP; increases degradation of the transferrin receptor." evidence="7">
    <original>Q</original>
    <variation>L</variation>
    <location>
        <position position="100"/>
    </location>
</feature>
<feature type="sequence conflict" description="In Ref. 3; BAB28956." evidence="11" ref="3">
    <original>V</original>
    <variation>L</variation>
    <location>
        <position position="83"/>
    </location>
</feature>
<feature type="sequence conflict" description="In Ref. 3; BAB28956." evidence="11" ref="3">
    <original>R</original>
    <variation>T</variation>
    <location>
        <position position="86"/>
    </location>
</feature>
<feature type="sequence conflict" description="In Ref. 3; BAB28956." evidence="11" ref="3">
    <original>AS</original>
    <variation>PD</variation>
    <location>
        <begin position="184"/>
        <end position="185"/>
    </location>
</feature>
<proteinExistence type="evidence at protein level"/>
<reference key="1">
    <citation type="journal article" date="2006" name="Genes Cells">
        <title>Screening for target Rabs of TBC (Tre-2/Bub2/Cdc16) domain-containing proteins based on their Rab-binding activity.</title>
        <authorList>
            <person name="Itoh T."/>
            <person name="Satoh M."/>
            <person name="Kanno E."/>
            <person name="Fukuda M."/>
        </authorList>
    </citation>
    <scope>NUCLEOTIDE SEQUENCE [MRNA]</scope>
</reference>
<reference key="2">
    <citation type="journal article" date="1992" name="Gene">
        <title>The complexity of the Rab and Rho GTP-binding protein subfamilies revealed by a PCR cloning approach.</title>
        <authorList>
            <person name="Chavrier P."/>
            <person name="Simons K."/>
            <person name="Zerial M."/>
        </authorList>
    </citation>
    <scope>NUCLEOTIDE SEQUENCE [MRNA] OF 53-101</scope>
    <source>
        <tissue>Kidney</tissue>
    </source>
</reference>
<reference key="3">
    <citation type="journal article" date="2005" name="Science">
        <title>The transcriptional landscape of the mammalian genome.</title>
        <authorList>
            <person name="Carninci P."/>
            <person name="Kasukawa T."/>
            <person name="Katayama S."/>
            <person name="Gough J."/>
            <person name="Frith M.C."/>
            <person name="Maeda N."/>
            <person name="Oyama R."/>
            <person name="Ravasi T."/>
            <person name="Lenhard B."/>
            <person name="Wells C."/>
            <person name="Kodzius R."/>
            <person name="Shimokawa K."/>
            <person name="Bajic V.B."/>
            <person name="Brenner S.E."/>
            <person name="Batalov S."/>
            <person name="Forrest A.R."/>
            <person name="Zavolan M."/>
            <person name="Davis M.J."/>
            <person name="Wilming L.G."/>
            <person name="Aidinis V."/>
            <person name="Allen J.E."/>
            <person name="Ambesi-Impiombato A."/>
            <person name="Apweiler R."/>
            <person name="Aturaliya R.N."/>
            <person name="Bailey T.L."/>
            <person name="Bansal M."/>
            <person name="Baxter L."/>
            <person name="Beisel K.W."/>
            <person name="Bersano T."/>
            <person name="Bono H."/>
            <person name="Chalk A.M."/>
            <person name="Chiu K.P."/>
            <person name="Choudhary V."/>
            <person name="Christoffels A."/>
            <person name="Clutterbuck D.R."/>
            <person name="Crowe M.L."/>
            <person name="Dalla E."/>
            <person name="Dalrymple B.P."/>
            <person name="de Bono B."/>
            <person name="Della Gatta G."/>
            <person name="di Bernardo D."/>
            <person name="Down T."/>
            <person name="Engstrom P."/>
            <person name="Fagiolini M."/>
            <person name="Faulkner G."/>
            <person name="Fletcher C.F."/>
            <person name="Fukushima T."/>
            <person name="Furuno M."/>
            <person name="Futaki S."/>
            <person name="Gariboldi M."/>
            <person name="Georgii-Hemming P."/>
            <person name="Gingeras T.R."/>
            <person name="Gojobori T."/>
            <person name="Green R.E."/>
            <person name="Gustincich S."/>
            <person name="Harbers M."/>
            <person name="Hayashi Y."/>
            <person name="Hensch T.K."/>
            <person name="Hirokawa N."/>
            <person name="Hill D."/>
            <person name="Huminiecki L."/>
            <person name="Iacono M."/>
            <person name="Ikeo K."/>
            <person name="Iwama A."/>
            <person name="Ishikawa T."/>
            <person name="Jakt M."/>
            <person name="Kanapin A."/>
            <person name="Katoh M."/>
            <person name="Kawasawa Y."/>
            <person name="Kelso J."/>
            <person name="Kitamura H."/>
            <person name="Kitano H."/>
            <person name="Kollias G."/>
            <person name="Krishnan S.P."/>
            <person name="Kruger A."/>
            <person name="Kummerfeld S.K."/>
            <person name="Kurochkin I.V."/>
            <person name="Lareau L.F."/>
            <person name="Lazarevic D."/>
            <person name="Lipovich L."/>
            <person name="Liu J."/>
            <person name="Liuni S."/>
            <person name="McWilliam S."/>
            <person name="Madan Babu M."/>
            <person name="Madera M."/>
            <person name="Marchionni L."/>
            <person name="Matsuda H."/>
            <person name="Matsuzawa S."/>
            <person name="Miki H."/>
            <person name="Mignone F."/>
            <person name="Miyake S."/>
            <person name="Morris K."/>
            <person name="Mottagui-Tabar S."/>
            <person name="Mulder N."/>
            <person name="Nakano N."/>
            <person name="Nakauchi H."/>
            <person name="Ng P."/>
            <person name="Nilsson R."/>
            <person name="Nishiguchi S."/>
            <person name="Nishikawa S."/>
            <person name="Nori F."/>
            <person name="Ohara O."/>
            <person name="Okazaki Y."/>
            <person name="Orlando V."/>
            <person name="Pang K.C."/>
            <person name="Pavan W.J."/>
            <person name="Pavesi G."/>
            <person name="Pesole G."/>
            <person name="Petrovsky N."/>
            <person name="Piazza S."/>
            <person name="Reed J."/>
            <person name="Reid J.F."/>
            <person name="Ring B.Z."/>
            <person name="Ringwald M."/>
            <person name="Rost B."/>
            <person name="Ruan Y."/>
            <person name="Salzberg S.L."/>
            <person name="Sandelin A."/>
            <person name="Schneider C."/>
            <person name="Schoenbach C."/>
            <person name="Sekiguchi K."/>
            <person name="Semple C.A."/>
            <person name="Seno S."/>
            <person name="Sessa L."/>
            <person name="Sheng Y."/>
            <person name="Shibata Y."/>
            <person name="Shimada H."/>
            <person name="Shimada K."/>
            <person name="Silva D."/>
            <person name="Sinclair B."/>
            <person name="Sperling S."/>
            <person name="Stupka E."/>
            <person name="Sugiura K."/>
            <person name="Sultana R."/>
            <person name="Takenaka Y."/>
            <person name="Taki K."/>
            <person name="Tammoja K."/>
            <person name="Tan S.L."/>
            <person name="Tang S."/>
            <person name="Taylor M.S."/>
            <person name="Tegner J."/>
            <person name="Teichmann S.A."/>
            <person name="Ueda H.R."/>
            <person name="van Nimwegen E."/>
            <person name="Verardo R."/>
            <person name="Wei C.L."/>
            <person name="Yagi K."/>
            <person name="Yamanishi H."/>
            <person name="Zabarovsky E."/>
            <person name="Zhu S."/>
            <person name="Zimmer A."/>
            <person name="Hide W."/>
            <person name="Bult C."/>
            <person name="Grimmond S.M."/>
            <person name="Teasdale R.D."/>
            <person name="Liu E.T."/>
            <person name="Brusic V."/>
            <person name="Quackenbush J."/>
            <person name="Wahlestedt C."/>
            <person name="Mattick J.S."/>
            <person name="Hume D.A."/>
            <person name="Kai C."/>
            <person name="Sasaki D."/>
            <person name="Tomaru Y."/>
            <person name="Fukuda S."/>
            <person name="Kanamori-Katayama M."/>
            <person name="Suzuki M."/>
            <person name="Aoki J."/>
            <person name="Arakawa T."/>
            <person name="Iida J."/>
            <person name="Imamura K."/>
            <person name="Itoh M."/>
            <person name="Kato T."/>
            <person name="Kawaji H."/>
            <person name="Kawagashira N."/>
            <person name="Kawashima T."/>
            <person name="Kojima M."/>
            <person name="Kondo S."/>
            <person name="Konno H."/>
            <person name="Nakano K."/>
            <person name="Ninomiya N."/>
            <person name="Nishio T."/>
            <person name="Okada M."/>
            <person name="Plessy C."/>
            <person name="Shibata K."/>
            <person name="Shiraki T."/>
            <person name="Suzuki S."/>
            <person name="Tagami M."/>
            <person name="Waki K."/>
            <person name="Watahiki A."/>
            <person name="Okamura-Oho Y."/>
            <person name="Suzuki H."/>
            <person name="Kawai J."/>
            <person name="Hayashizaki Y."/>
        </authorList>
    </citation>
    <scope>NUCLEOTIDE SEQUENCE [LARGE SCALE MRNA] OF 83-243</scope>
    <source>
        <strain>C57BL/6J</strain>
        <tissue>Hippocampus</tissue>
    </source>
</reference>
<reference key="4">
    <citation type="journal article" date="2007" name="Mol. Cell. Proteomics">
        <title>Qualitative and quantitative analyses of protein phosphorylation in naive and stimulated mouse synaptosomal preparations.</title>
        <authorList>
            <person name="Munton R.P."/>
            <person name="Tweedie-Cullen R."/>
            <person name="Livingstone-Zatchej M."/>
            <person name="Weinandy F."/>
            <person name="Waidelich M."/>
            <person name="Longo D."/>
            <person name="Gehrig P."/>
            <person name="Potthast F."/>
            <person name="Rutishauser D."/>
            <person name="Gerrits B."/>
            <person name="Panse C."/>
            <person name="Schlapbach R."/>
            <person name="Mansuy I.M."/>
        </authorList>
    </citation>
    <scope>IDENTIFICATION BY MASS SPECTROMETRY [LARGE SCALE ANALYSIS]</scope>
    <source>
        <tissue>Brain cortex</tissue>
    </source>
</reference>
<reference key="5">
    <citation type="journal article" date="2009" name="Immunity">
        <title>The phagosomal proteome in interferon-gamma-activated macrophages.</title>
        <authorList>
            <person name="Trost M."/>
            <person name="English L."/>
            <person name="Lemieux S."/>
            <person name="Courcelles M."/>
            <person name="Desjardins M."/>
            <person name="Thibault P."/>
        </authorList>
    </citation>
    <scope>PHOSPHORYLATION [LARGE SCALE ANALYSIS] AT SER-15; SER-20 AND SER-105</scope>
    <scope>IDENTIFICATION BY MASS SPECTROMETRY [LARGE SCALE ANALYSIS]</scope>
</reference>
<reference key="6">
    <citation type="journal article" date="2009" name="Mol. Cell. Proteomics">
        <title>Large scale localization of protein phosphorylation by use of electron capture dissociation mass spectrometry.</title>
        <authorList>
            <person name="Sweet S.M."/>
            <person name="Bailey C.M."/>
            <person name="Cunningham D.L."/>
            <person name="Heath J.K."/>
            <person name="Cooper H.J."/>
        </authorList>
    </citation>
    <scope>PHOSPHORYLATION [LARGE SCALE ANALYSIS] AT SER-20</scope>
    <scope>IDENTIFICATION BY MASS SPECTROMETRY [LARGE SCALE ANALYSIS]</scope>
    <source>
        <tissue>Embryonic fibroblast</tissue>
    </source>
</reference>
<reference key="7">
    <citation type="journal article" date="2010" name="Cell">
        <title>A tissue-specific atlas of mouse protein phosphorylation and expression.</title>
        <authorList>
            <person name="Huttlin E.L."/>
            <person name="Jedrychowski M.P."/>
            <person name="Elias J.E."/>
            <person name="Goswami T."/>
            <person name="Rad R."/>
            <person name="Beausoleil S.A."/>
            <person name="Villen J."/>
            <person name="Haas W."/>
            <person name="Sowa M.E."/>
            <person name="Gygi S.P."/>
        </authorList>
    </citation>
    <scope>PHOSPHORYLATION [LARGE SCALE ANALYSIS] AT SER-15; SER-20; SER-24 AND SER-105</scope>
    <scope>IDENTIFICATION BY MASS SPECTROMETRY [LARGE SCALE ANALYSIS]</scope>
    <source>
        <tissue>Brain</tissue>
        <tissue>Brown adipose tissue</tissue>
        <tissue>Heart</tissue>
        <tissue>Kidney</tissue>
        <tissue>Lung</tissue>
        <tissue>Pancreas</tissue>
        <tissue>Spleen</tissue>
        <tissue>Testis</tissue>
    </source>
</reference>
<reference key="8">
    <citation type="journal article" date="2011" name="Traffic">
        <title>Small GTPase Rab12 regulates constitutive degradation of transferrin receptor.</title>
        <authorList>
            <person name="Matsui T."/>
            <person name="Itoh T."/>
            <person name="Fukuda M."/>
        </authorList>
    </citation>
    <scope>FUNCTION</scope>
    <scope>SUBCELLULAR LOCATION</scope>
    <scope>TISSUE SPECIFICITY</scope>
    <scope>MUTAGENESIS OF GLN-100</scope>
    <scope>ACTIVITY REGULATION</scope>
</reference>
<reference key="9">
    <citation type="journal article" date="2013" name="Autophagy">
        <title>M98K-OPTN induces transferrin receptor degradation and RAB12-mediated autophagic death in retinal ganglion cells.</title>
        <authorList>
            <person name="Sirohi K."/>
            <person name="Chalasani M.L."/>
            <person name="Sudhakar C."/>
            <person name="Kumari A."/>
            <person name="Radha V."/>
            <person name="Swarup G."/>
        </authorList>
    </citation>
    <scope>FUNCTION</scope>
    <scope>SUBCELLULAR LOCATION</scope>
    <scope>INTERACTION WITH OPTN</scope>
</reference>
<reference key="10">
    <citation type="journal article" date="2016" name="Elife">
        <title>Phosphoproteomics reveals that Parkinson's disease kinase LRRK2 regulates a subset of Rab GTPases.</title>
        <authorList>
            <person name="Steger M."/>
            <person name="Tonelli F."/>
            <person name="Ito G."/>
            <person name="Davies P."/>
            <person name="Trost M."/>
            <person name="Vetter M."/>
            <person name="Wachter S."/>
            <person name="Lorentzen E."/>
            <person name="Duddy G."/>
            <person name="Wilson S."/>
            <person name="Baptista M.A."/>
            <person name="Fiske B.K."/>
            <person name="Fell M.J."/>
            <person name="Morrow J.A."/>
            <person name="Reith A.D."/>
            <person name="Alessi D.R."/>
            <person name="Mann M."/>
        </authorList>
    </citation>
    <scope>PHOSPHORYLATION AT SER-105</scope>
</reference>
<reference key="11">
    <citation type="journal article" date="2017" name="Elife">
        <title>Systematic proteomic analysis of LRRK2-mediated Rab GTPase phosphorylation establishes a connection to ciliogenesis.</title>
        <authorList>
            <person name="Steger M."/>
            <person name="Diez F."/>
            <person name="Dhekne H.S."/>
            <person name="Lis P."/>
            <person name="Nirujogi R.S."/>
            <person name="Karayel O."/>
            <person name="Tonelli F."/>
            <person name="Martinez T.N."/>
            <person name="Lorentzen E."/>
            <person name="Pfeffer S.R."/>
            <person name="Alessi D.R."/>
            <person name="Mann M."/>
        </authorList>
    </citation>
    <scope>PHOSPHORYLATION AT SER-105</scope>
</reference>
<dbReference type="EC" id="3.6.5.2" evidence="3"/>
<dbReference type="EMBL" id="AB232607">
    <property type="protein sequence ID" value="BAF02869.1"/>
    <property type="molecule type" value="mRNA"/>
</dbReference>
<dbReference type="EMBL" id="M79303">
    <property type="protein sequence ID" value="AAK14827.1"/>
    <property type="molecule type" value="mRNA"/>
</dbReference>
<dbReference type="EMBL" id="AK013690">
    <property type="protein sequence ID" value="BAB28956.1"/>
    <property type="molecule type" value="mRNA"/>
</dbReference>
<dbReference type="PIR" id="JH0643">
    <property type="entry name" value="JH0643"/>
</dbReference>
<dbReference type="RefSeq" id="NP_077768.2">
    <property type="nucleotide sequence ID" value="NM_024448.2"/>
</dbReference>
<dbReference type="SMR" id="P35283"/>
<dbReference type="BioGRID" id="202534">
    <property type="interactions" value="3"/>
</dbReference>
<dbReference type="FunCoup" id="P35283">
    <property type="interactions" value="534"/>
</dbReference>
<dbReference type="IntAct" id="P35283">
    <property type="interactions" value="5"/>
</dbReference>
<dbReference type="MINT" id="P35283"/>
<dbReference type="STRING" id="10090.ENSMUSP00000128645"/>
<dbReference type="GlyGen" id="P35283">
    <property type="glycosylation" value="1 site, 1 O-linked glycan (1 site)"/>
</dbReference>
<dbReference type="iPTMnet" id="P35283"/>
<dbReference type="PhosphoSitePlus" id="P35283"/>
<dbReference type="SwissPalm" id="P35283"/>
<dbReference type="jPOST" id="P35283"/>
<dbReference type="PaxDb" id="10090-ENSMUSP00000070134"/>
<dbReference type="PeptideAtlas" id="P35283"/>
<dbReference type="ProteomicsDB" id="253140"/>
<dbReference type="Pumba" id="P35283"/>
<dbReference type="Antibodypedia" id="41715">
    <property type="antibodies" value="119 antibodies from 23 providers"/>
</dbReference>
<dbReference type="DNASU" id="19328"/>
<dbReference type="GeneID" id="19328"/>
<dbReference type="KEGG" id="mmu:19328"/>
<dbReference type="UCSC" id="uc008djy.1">
    <property type="organism name" value="mouse"/>
</dbReference>
<dbReference type="AGR" id="MGI:894284"/>
<dbReference type="CTD" id="201475"/>
<dbReference type="MGI" id="MGI:894284">
    <property type="gene designation" value="Rab12"/>
</dbReference>
<dbReference type="VEuPathDB" id="HostDB:ENSMUSG00000023460"/>
<dbReference type="eggNOG" id="KOG0078">
    <property type="taxonomic scope" value="Eukaryota"/>
</dbReference>
<dbReference type="eggNOG" id="KOG0395">
    <property type="taxonomic scope" value="Eukaryota"/>
</dbReference>
<dbReference type="HOGENOM" id="CLU_041217_2_1_1"/>
<dbReference type="InParanoid" id="P35283"/>
<dbReference type="PhylomeDB" id="P35283"/>
<dbReference type="Reactome" id="R-MMU-8873719">
    <property type="pathway name" value="RAB geranylgeranylation"/>
</dbReference>
<dbReference type="Reactome" id="R-MMU-8876198">
    <property type="pathway name" value="RAB GEFs exchange GTP for GDP on RABs"/>
</dbReference>
<dbReference type="BioGRID-ORCS" id="19328">
    <property type="hits" value="3 hits in 77 CRISPR screens"/>
</dbReference>
<dbReference type="ChiTaRS" id="Rab12">
    <property type="organism name" value="mouse"/>
</dbReference>
<dbReference type="PRO" id="PR:P35283"/>
<dbReference type="Proteomes" id="UP000000589">
    <property type="component" value="Chromosome 17"/>
</dbReference>
<dbReference type="RNAct" id="P35283">
    <property type="molecule type" value="protein"/>
</dbReference>
<dbReference type="Bgee" id="ENSMUSG00000023460">
    <property type="expression patterns" value="Expressed in hindlimb stylopod muscle and 260 other cell types or tissues"/>
</dbReference>
<dbReference type="ExpressionAtlas" id="P35283">
    <property type="expression patterns" value="baseline and differential"/>
</dbReference>
<dbReference type="GO" id="GO:0005776">
    <property type="term" value="C:autophagosome"/>
    <property type="evidence" value="ECO:0000314"/>
    <property type="project" value="UniProtKB"/>
</dbReference>
<dbReference type="GO" id="GO:0000139">
    <property type="term" value="C:Golgi membrane"/>
    <property type="evidence" value="ECO:0007669"/>
    <property type="project" value="UniProtKB-SubCell"/>
</dbReference>
<dbReference type="GO" id="GO:0005765">
    <property type="term" value="C:lysosomal membrane"/>
    <property type="evidence" value="ECO:0007669"/>
    <property type="project" value="UniProtKB-SubCell"/>
</dbReference>
<dbReference type="GO" id="GO:0005764">
    <property type="term" value="C:lysosome"/>
    <property type="evidence" value="ECO:0000314"/>
    <property type="project" value="UniProtKB"/>
</dbReference>
<dbReference type="GO" id="GO:0045335">
    <property type="term" value="C:phagocytic vesicle"/>
    <property type="evidence" value="ECO:0000314"/>
    <property type="project" value="MGI"/>
</dbReference>
<dbReference type="GO" id="GO:0055038">
    <property type="term" value="C:recycling endosome membrane"/>
    <property type="evidence" value="ECO:0000314"/>
    <property type="project" value="UniProtKB"/>
</dbReference>
<dbReference type="GO" id="GO:0019003">
    <property type="term" value="F:GDP binding"/>
    <property type="evidence" value="ECO:0000250"/>
    <property type="project" value="UniProtKB"/>
</dbReference>
<dbReference type="GO" id="GO:0005525">
    <property type="term" value="F:GTP binding"/>
    <property type="evidence" value="ECO:0007669"/>
    <property type="project" value="UniProtKB-KW"/>
</dbReference>
<dbReference type="GO" id="GO:0003924">
    <property type="term" value="F:GTPase activity"/>
    <property type="evidence" value="ECO:0007669"/>
    <property type="project" value="InterPro"/>
</dbReference>
<dbReference type="GO" id="GO:0006914">
    <property type="term" value="P:autophagy"/>
    <property type="evidence" value="ECO:0007669"/>
    <property type="project" value="UniProtKB-KW"/>
</dbReference>
<dbReference type="GO" id="GO:0071346">
    <property type="term" value="P:cellular response to type II interferon"/>
    <property type="evidence" value="ECO:0000314"/>
    <property type="project" value="MGI"/>
</dbReference>
<dbReference type="GO" id="GO:0008333">
    <property type="term" value="P:endosome to lysosome transport"/>
    <property type="evidence" value="ECO:0000315"/>
    <property type="project" value="UniProtKB"/>
</dbReference>
<dbReference type="GO" id="GO:0016239">
    <property type="term" value="P:positive regulation of macroautophagy"/>
    <property type="evidence" value="ECO:0000315"/>
    <property type="project" value="UniProtKB"/>
</dbReference>
<dbReference type="GO" id="GO:0030163">
    <property type="term" value="P:protein catabolic process"/>
    <property type="evidence" value="ECO:0000315"/>
    <property type="project" value="UniProtKB"/>
</dbReference>
<dbReference type="GO" id="GO:0015031">
    <property type="term" value="P:protein transport"/>
    <property type="evidence" value="ECO:0007669"/>
    <property type="project" value="UniProtKB-KW"/>
</dbReference>
<dbReference type="GO" id="GO:0032482">
    <property type="term" value="P:Rab protein signal transduction"/>
    <property type="evidence" value="ECO:0007669"/>
    <property type="project" value="InterPro"/>
</dbReference>
<dbReference type="CDD" id="cd04120">
    <property type="entry name" value="Rab12"/>
    <property type="match status" value="1"/>
</dbReference>
<dbReference type="FunFam" id="3.40.50.300:FF:000568">
    <property type="entry name" value="Putative Ras-related protein Rab-12"/>
    <property type="match status" value="1"/>
</dbReference>
<dbReference type="Gene3D" id="3.40.50.300">
    <property type="entry name" value="P-loop containing nucleotide triphosphate hydrolases"/>
    <property type="match status" value="1"/>
</dbReference>
<dbReference type="InterPro" id="IPR027417">
    <property type="entry name" value="P-loop_NTPase"/>
</dbReference>
<dbReference type="InterPro" id="IPR041830">
    <property type="entry name" value="Rab12"/>
</dbReference>
<dbReference type="InterPro" id="IPR005225">
    <property type="entry name" value="Small_GTP-bd"/>
</dbReference>
<dbReference type="InterPro" id="IPR001806">
    <property type="entry name" value="Small_GTPase"/>
</dbReference>
<dbReference type="InterPro" id="IPR050305">
    <property type="entry name" value="Small_GTPase_Rab"/>
</dbReference>
<dbReference type="NCBIfam" id="TIGR00231">
    <property type="entry name" value="small_GTP"/>
    <property type="match status" value="1"/>
</dbReference>
<dbReference type="PANTHER" id="PTHR47980">
    <property type="entry name" value="LD44762P"/>
    <property type="match status" value="1"/>
</dbReference>
<dbReference type="Pfam" id="PF00071">
    <property type="entry name" value="Ras"/>
    <property type="match status" value="1"/>
</dbReference>
<dbReference type="PRINTS" id="PR00449">
    <property type="entry name" value="RASTRNSFRMNG"/>
</dbReference>
<dbReference type="SMART" id="SM00175">
    <property type="entry name" value="RAB"/>
    <property type="match status" value="1"/>
</dbReference>
<dbReference type="SMART" id="SM00176">
    <property type="entry name" value="RAN"/>
    <property type="match status" value="1"/>
</dbReference>
<dbReference type="SMART" id="SM00173">
    <property type="entry name" value="RAS"/>
    <property type="match status" value="1"/>
</dbReference>
<dbReference type="SMART" id="SM00174">
    <property type="entry name" value="RHO"/>
    <property type="match status" value="1"/>
</dbReference>
<dbReference type="SUPFAM" id="SSF52540">
    <property type="entry name" value="P-loop containing nucleoside triphosphate hydrolases"/>
    <property type="match status" value="1"/>
</dbReference>
<dbReference type="PROSITE" id="PS51419">
    <property type="entry name" value="RAB"/>
    <property type="match status" value="1"/>
</dbReference>
<gene>
    <name evidence="12" type="primary">Rab12</name>
</gene>
<name>RAB12_MOUSE</name>
<comment type="function">
    <text evidence="3 7 8">The small GTPases Rab are key regulators of intracellular membrane trafficking, from the formation of transport vesicles to their fusion with membranes. Rabs cycle between an inactive GDP-bound form and an active GTP-bound form that is able to recruit to membranes different set of downstream effectors directly responsible for vesicle formation, movement, tethering and fusion (By similarity). RAB12 may play a role in protein transport from recycling endosomes to lysosomes regulating, for instance, the degradation of the transferrin receptor (PubMed:21718402). Involved in autophagy (PubMed:23357852).</text>
</comment>
<comment type="catalytic activity">
    <reaction evidence="3">
        <text>GTP + H2O = GDP + phosphate + H(+)</text>
        <dbReference type="Rhea" id="RHEA:19669"/>
        <dbReference type="ChEBI" id="CHEBI:15377"/>
        <dbReference type="ChEBI" id="CHEBI:15378"/>
        <dbReference type="ChEBI" id="CHEBI:37565"/>
        <dbReference type="ChEBI" id="CHEBI:43474"/>
        <dbReference type="ChEBI" id="CHEBI:58189"/>
        <dbReference type="EC" id="3.6.5.2"/>
    </reaction>
    <physiologicalReaction direction="left-to-right" evidence="3">
        <dbReference type="Rhea" id="RHEA:19670"/>
    </physiologicalReaction>
</comment>
<comment type="cofactor">
    <cofactor evidence="5">
        <name>Mg(2+)</name>
        <dbReference type="ChEBI" id="CHEBI:18420"/>
    </cofactor>
</comment>
<comment type="activity regulation">
    <text evidence="7 11">Regulated by guanine nucleotide exchange factors (GEFs) including DENND3 which promote the exchange of bound GDP for free GTP (PubMed:21718402). Regulated by GTPase activating proteins (GAPs) which increase the GTP hydrolysis activity. Inhibited by GDP dissociation inhibitors (GDIs) (Probable).</text>
</comment>
<comment type="subunit">
    <text evidence="5 8">Interacts with RABIF and OPTN (PubMed:23357852). Interacts with LRRK2; interaction facilitates phosphorylation of Ser-105 (By similarity). Interacts with GDI1, GDI2, CHM and CHML; these interactions are disrupted by phosphorylation on Ser-105 (By similarity). Interacts with RILPL1 and RILPL2; these interactions are dependent on phosphorylation of Ser-105 (By similarity).</text>
</comment>
<comment type="subcellular location">
    <subcellularLocation>
        <location evidence="7">Recycling endosome membrane</location>
        <topology evidence="11">Lipid-anchor</topology>
        <orientation evidence="11">Cytoplasmic side</orientation>
    </subcellularLocation>
    <subcellularLocation>
        <location evidence="7">Lysosome membrane</location>
        <topology evidence="11">Lipid-anchor</topology>
        <orientation evidence="11">Cytoplasmic side</orientation>
    </subcellularLocation>
    <subcellularLocation>
        <location evidence="2">Golgi apparatus membrane</location>
    </subcellularLocation>
    <subcellularLocation>
        <location evidence="8">Cytoplasmic vesicle</location>
        <location evidence="8">Autophagosome</location>
    </subcellularLocation>
</comment>
<comment type="tissue specificity">
    <text evidence="7">Ubiquitously expressed.</text>
</comment>
<comment type="domain">
    <text evidence="4">Switch 1, switch 2 and the interswitch regions are characteristic of Rab GTPases and mediate the interactions with Rab downstream effectors. The switch regions undergo conformational changes upon nucleotide binding which drives interaction with specific sets of effector proteins, with most effectors only binding to GTP-bound Rab.</text>
</comment>
<comment type="PTM">
    <text evidence="5">Phosphorylation of Ser-105 in the switch II region by LRRK2 prevents the association of RAB regulatory proteins, including CHM, CHML and RAB GDP dissociation inhibitors GDI1 and GDI2.</text>
</comment>
<comment type="similarity">
    <text evidence="11">Belongs to the small GTPase superfamily. Rab family.</text>
</comment>